<organism>
    <name type="scientific">Mus musculus</name>
    <name type="common">Mouse</name>
    <dbReference type="NCBI Taxonomy" id="10090"/>
    <lineage>
        <taxon>Eukaryota</taxon>
        <taxon>Metazoa</taxon>
        <taxon>Chordata</taxon>
        <taxon>Craniata</taxon>
        <taxon>Vertebrata</taxon>
        <taxon>Euteleostomi</taxon>
        <taxon>Mammalia</taxon>
        <taxon>Eutheria</taxon>
        <taxon>Euarchontoglires</taxon>
        <taxon>Glires</taxon>
        <taxon>Rodentia</taxon>
        <taxon>Myomorpha</taxon>
        <taxon>Muroidea</taxon>
        <taxon>Muridae</taxon>
        <taxon>Murinae</taxon>
        <taxon>Mus</taxon>
        <taxon>Mus</taxon>
    </lineage>
</organism>
<keyword id="KW-0145">Chemotaxis</keyword>
<keyword id="KW-0202">Cytokine</keyword>
<keyword id="KW-1015">Disulfide bond</keyword>
<keyword id="KW-0395">Inflammatory response</keyword>
<keyword id="KW-1185">Reference proteome</keyword>
<keyword id="KW-0964">Secreted</keyword>
<keyword id="KW-0732">Signal</keyword>
<proteinExistence type="evidence at transcript level"/>
<comment type="function">
    <text>Chemotactic for activated T-lymphocytes. May play an important role in the collaboration of dendritic cells and B-lymphocytes with T-cells in immune responses.</text>
</comment>
<comment type="subcellular location">
    <subcellularLocation>
        <location>Secreted</location>
    </subcellularLocation>
</comment>
<comment type="tissue specificity">
    <text>Expressed by activated splenic B-lymphocytes and dendritic cells. Low expression in lung, thymocytes, lymph node, and unstimulated splenic cells.</text>
</comment>
<comment type="similarity">
    <text evidence="3">Belongs to the intercrine beta (chemokine CC) family.</text>
</comment>
<protein>
    <recommendedName>
        <fullName>C-C motif chemokine 22</fullName>
    </recommendedName>
    <alternativeName>
        <fullName>Activated B and dendritic cell-derived</fullName>
    </alternativeName>
    <alternativeName>
        <fullName>CC chemokine ABCD-1</fullName>
    </alternativeName>
    <alternativeName>
        <fullName>Small-inducible cytokine A22</fullName>
    </alternativeName>
</protein>
<dbReference type="EMBL" id="AF052505">
    <property type="protein sequence ID" value="AAC40200.1"/>
    <property type="molecule type" value="mRNA"/>
</dbReference>
<dbReference type="EMBL" id="BC012658">
    <property type="protein sequence ID" value="AAH12658.1"/>
    <property type="molecule type" value="mRNA"/>
</dbReference>
<dbReference type="CCDS" id="CCDS40441.1"/>
<dbReference type="RefSeq" id="NP_033163.1">
    <property type="nucleotide sequence ID" value="NM_009137.2"/>
</dbReference>
<dbReference type="SMR" id="O88430"/>
<dbReference type="CORUM" id="O88430"/>
<dbReference type="FunCoup" id="O88430">
    <property type="interactions" value="843"/>
</dbReference>
<dbReference type="STRING" id="10090.ENSMUSP00000034231"/>
<dbReference type="PhosphoSitePlus" id="O88430"/>
<dbReference type="PaxDb" id="10090-ENSMUSP00000034231"/>
<dbReference type="Antibodypedia" id="15019">
    <property type="antibodies" value="517 antibodies from 33 providers"/>
</dbReference>
<dbReference type="DNASU" id="20299"/>
<dbReference type="Ensembl" id="ENSMUST00000034231.4">
    <property type="protein sequence ID" value="ENSMUSP00000034231.4"/>
    <property type="gene ID" value="ENSMUSG00000031779.4"/>
</dbReference>
<dbReference type="GeneID" id="20299"/>
<dbReference type="KEGG" id="mmu:20299"/>
<dbReference type="UCSC" id="uc009mww.1">
    <property type="organism name" value="mouse"/>
</dbReference>
<dbReference type="AGR" id="MGI:1306779"/>
<dbReference type="CTD" id="6367"/>
<dbReference type="MGI" id="MGI:1306779">
    <property type="gene designation" value="Ccl22"/>
</dbReference>
<dbReference type="VEuPathDB" id="HostDB:ENSMUSG00000031779"/>
<dbReference type="eggNOG" id="ENOG502SWZ0">
    <property type="taxonomic scope" value="Eukaryota"/>
</dbReference>
<dbReference type="GeneTree" id="ENSGT01100000263482"/>
<dbReference type="HOGENOM" id="CLU_141716_4_2_1"/>
<dbReference type="InParanoid" id="O88430"/>
<dbReference type="OMA" id="RDYIRHP"/>
<dbReference type="OrthoDB" id="9892424at2759"/>
<dbReference type="PhylomeDB" id="O88430"/>
<dbReference type="TreeFam" id="TF334888"/>
<dbReference type="Reactome" id="R-MMU-380108">
    <property type="pathway name" value="Chemokine receptors bind chemokines"/>
</dbReference>
<dbReference type="BioGRID-ORCS" id="20299">
    <property type="hits" value="1 hit in 77 CRISPR screens"/>
</dbReference>
<dbReference type="PRO" id="PR:O88430"/>
<dbReference type="Proteomes" id="UP000000589">
    <property type="component" value="Chromosome 8"/>
</dbReference>
<dbReference type="RNAct" id="O88430">
    <property type="molecule type" value="protein"/>
</dbReference>
<dbReference type="Bgee" id="ENSMUSG00000031779">
    <property type="expression patterns" value="Expressed in peripheral lymph node and 25 other cell types or tissues"/>
</dbReference>
<dbReference type="ExpressionAtlas" id="O88430">
    <property type="expression patterns" value="baseline and differential"/>
</dbReference>
<dbReference type="GO" id="GO:0005615">
    <property type="term" value="C:extracellular space"/>
    <property type="evidence" value="ECO:0000314"/>
    <property type="project" value="MGI"/>
</dbReference>
<dbReference type="GO" id="GO:0008009">
    <property type="term" value="F:chemokine activity"/>
    <property type="evidence" value="ECO:0007669"/>
    <property type="project" value="InterPro"/>
</dbReference>
<dbReference type="GO" id="GO:0006955">
    <property type="term" value="P:immune response"/>
    <property type="evidence" value="ECO:0007669"/>
    <property type="project" value="InterPro"/>
</dbReference>
<dbReference type="GO" id="GO:0006954">
    <property type="term" value="P:inflammatory response"/>
    <property type="evidence" value="ECO:0007669"/>
    <property type="project" value="UniProtKB-KW"/>
</dbReference>
<dbReference type="CDD" id="cd00272">
    <property type="entry name" value="Chemokine_CC"/>
    <property type="match status" value="1"/>
</dbReference>
<dbReference type="FunFam" id="2.40.50.40:FF:000025">
    <property type="entry name" value="C-C motif chemokine"/>
    <property type="match status" value="1"/>
</dbReference>
<dbReference type="Gene3D" id="2.40.50.40">
    <property type="match status" value="1"/>
</dbReference>
<dbReference type="InterPro" id="IPR039809">
    <property type="entry name" value="Chemokine_b/g/d"/>
</dbReference>
<dbReference type="InterPro" id="IPR000827">
    <property type="entry name" value="Chemokine_CC_CS"/>
</dbReference>
<dbReference type="InterPro" id="IPR001811">
    <property type="entry name" value="Chemokine_IL8-like_dom"/>
</dbReference>
<dbReference type="InterPro" id="IPR036048">
    <property type="entry name" value="Interleukin_8-like_sf"/>
</dbReference>
<dbReference type="PANTHER" id="PTHR12015:SF102">
    <property type="entry name" value="C-C MOTIF CHEMOKINE 22"/>
    <property type="match status" value="1"/>
</dbReference>
<dbReference type="PANTHER" id="PTHR12015">
    <property type="entry name" value="SMALL INDUCIBLE CYTOKINE A"/>
    <property type="match status" value="1"/>
</dbReference>
<dbReference type="Pfam" id="PF00048">
    <property type="entry name" value="IL8"/>
    <property type="match status" value="1"/>
</dbReference>
<dbReference type="PRINTS" id="PR00436">
    <property type="entry name" value="INTERLEUKIN8"/>
</dbReference>
<dbReference type="SMART" id="SM00199">
    <property type="entry name" value="SCY"/>
    <property type="match status" value="1"/>
</dbReference>
<dbReference type="SUPFAM" id="SSF54117">
    <property type="entry name" value="Interleukin 8-like chemokines"/>
    <property type="match status" value="1"/>
</dbReference>
<dbReference type="PROSITE" id="PS00472">
    <property type="entry name" value="SMALL_CYTOKINES_CC"/>
    <property type="match status" value="1"/>
</dbReference>
<reference key="1">
    <citation type="journal article" date="1998" name="J. Exp. Med.">
        <title>Activated murine B lymphocytes and dendritic cells produce a novel CC chemokine which acts selectively on activated T cells.</title>
        <authorList>
            <person name="Schaniel C."/>
            <person name="Pardali E."/>
            <person name="Sallusto F."/>
            <person name="Speletas M."/>
            <person name="Ruedl C."/>
            <person name="Shimizu T."/>
            <person name="Seidl T."/>
            <person name="Andersson J."/>
            <person name="Melchers F."/>
            <person name="Rolink A.G."/>
            <person name="Sideras P."/>
        </authorList>
    </citation>
    <scope>NUCLEOTIDE SEQUENCE [MRNA]</scope>
    <source>
        <tissue>Liver</tissue>
    </source>
</reference>
<reference key="2">
    <citation type="journal article" date="2004" name="Genome Res.">
        <title>The status, quality, and expansion of the NIH full-length cDNA project: the Mammalian Gene Collection (MGC).</title>
        <authorList>
            <consortium name="The MGC Project Team"/>
        </authorList>
    </citation>
    <scope>NUCLEOTIDE SEQUENCE [LARGE SCALE MRNA]</scope>
    <source>
        <strain>FVB/N</strain>
        <tissue>Salivary gland</tissue>
    </source>
</reference>
<name>CCL22_MOUSE</name>
<feature type="signal peptide" evidence="2">
    <location>
        <begin position="1"/>
        <end position="24"/>
    </location>
</feature>
<feature type="chain" id="PRO_0000005228" description="C-C motif chemokine 22">
    <location>
        <begin position="25"/>
        <end position="92"/>
    </location>
</feature>
<feature type="disulfide bond" evidence="1">
    <location>
        <begin position="36"/>
        <end position="60"/>
    </location>
</feature>
<feature type="disulfide bond" evidence="1">
    <location>
        <begin position="37"/>
        <end position="76"/>
    </location>
</feature>
<evidence type="ECO:0000250" key="1"/>
<evidence type="ECO:0000255" key="2"/>
<evidence type="ECO:0000305" key="3"/>
<sequence>MATLRVPLLVALVLLAVAIQTSDAGPYGANVEDSICCQDYIRHPLPSRLVKEFFWTSKSCRKPGVVLITVKNRDICADPRQVWVKKLLHKLS</sequence>
<accession>O88430</accession>
<gene>
    <name type="primary">Ccl22</name>
    <name type="synonym">Abcd1</name>
    <name type="synonym">Scya22</name>
</gene>